<reference key="1">
    <citation type="journal article" date="2011" name="BMC Genomics">
        <title>Complete genome sequence of the filamentous anoxygenic phototrophic bacterium Chloroflexus aurantiacus.</title>
        <authorList>
            <person name="Tang K.H."/>
            <person name="Barry K."/>
            <person name="Chertkov O."/>
            <person name="Dalin E."/>
            <person name="Han C.S."/>
            <person name="Hauser L.J."/>
            <person name="Honchak B.M."/>
            <person name="Karbach L.E."/>
            <person name="Land M.L."/>
            <person name="Lapidus A."/>
            <person name="Larimer F.W."/>
            <person name="Mikhailova N."/>
            <person name="Pitluck S."/>
            <person name="Pierson B.K."/>
            <person name="Blankenship R.E."/>
        </authorList>
    </citation>
    <scope>NUCLEOTIDE SEQUENCE [LARGE SCALE GENOMIC DNA]</scope>
    <source>
        <strain>ATCC 29366 / DSM 635 / J-10-fl</strain>
    </source>
</reference>
<protein>
    <recommendedName>
        <fullName evidence="1">Formate--tetrahydrofolate ligase</fullName>
        <ecNumber evidence="1">6.3.4.3</ecNumber>
    </recommendedName>
    <alternativeName>
        <fullName evidence="1">Formyltetrahydrofolate synthetase</fullName>
        <shortName evidence="1">FHS</shortName>
        <shortName evidence="1">FTHFS</shortName>
    </alternativeName>
</protein>
<name>FTHS_CHLAA</name>
<accession>A9WIW3</accession>
<evidence type="ECO:0000255" key="1">
    <source>
        <dbReference type="HAMAP-Rule" id="MF_01543"/>
    </source>
</evidence>
<comment type="catalytic activity">
    <reaction evidence="1">
        <text>(6S)-5,6,7,8-tetrahydrofolate + formate + ATP = (6R)-10-formyltetrahydrofolate + ADP + phosphate</text>
        <dbReference type="Rhea" id="RHEA:20221"/>
        <dbReference type="ChEBI" id="CHEBI:15740"/>
        <dbReference type="ChEBI" id="CHEBI:30616"/>
        <dbReference type="ChEBI" id="CHEBI:43474"/>
        <dbReference type="ChEBI" id="CHEBI:57453"/>
        <dbReference type="ChEBI" id="CHEBI:195366"/>
        <dbReference type="ChEBI" id="CHEBI:456216"/>
        <dbReference type="EC" id="6.3.4.3"/>
    </reaction>
</comment>
<comment type="pathway">
    <text evidence="1">One-carbon metabolism; tetrahydrofolate interconversion.</text>
</comment>
<comment type="similarity">
    <text evidence="1">Belongs to the formate--tetrahydrofolate ligase family.</text>
</comment>
<proteinExistence type="inferred from homology"/>
<sequence length="572" mass="60580">MKTSLQIAAEARLEPIAAIAERLGLPVRYLEPYGRYRGKIDLTFLDDYHDRPLGRYVLVSAITPTPLGEGKTTTAIGLAMALNRIGKRAAVTLRQSSLGPVFGIKGGGAGGGYSQIVPLVESILHLNGDIHAVSQAHNQLAALTDNSWYHGNPLDIDPDRIEIRRVVDVNDRFLRQVMIGLGGKQNGFPRQTGFDISVASELMAILAMVNGVGARAALRDLRSRIGRMVVAFRRDGTPITAEDVRGAGAATVLMREALKPNLMQTIENTPALIHAGPFANIAQGNSSILADLIALRCADYVVTEAGFGVDIGAEKFFNLKCRASGLWPDVAVIVATIRALKAHSGKYDIVAGKPLPPALLHENPDDVISGGANLRRQIENLHQFKVPVIVALNAYPEDTPAEIDAVAHIATTAGAAGMAVSNVYAAGSAGGVDLARLVIEIAERPGPRPVQFLYPLEWSLADKITTIAHRIYGAAAVTFSPTAAAQLAALEDAGFGNLPICMAKTHLSLSHDPALRGAPEGFTFPIREVRLSAGAGFILPIAGTTVTMPGLGAHPAAHQIDIDDEGNIVGLF</sequence>
<organism>
    <name type="scientific">Chloroflexus aurantiacus (strain ATCC 29366 / DSM 635 / J-10-fl)</name>
    <dbReference type="NCBI Taxonomy" id="324602"/>
    <lineage>
        <taxon>Bacteria</taxon>
        <taxon>Bacillati</taxon>
        <taxon>Chloroflexota</taxon>
        <taxon>Chloroflexia</taxon>
        <taxon>Chloroflexales</taxon>
        <taxon>Chloroflexineae</taxon>
        <taxon>Chloroflexaceae</taxon>
        <taxon>Chloroflexus</taxon>
    </lineage>
</organism>
<dbReference type="EC" id="6.3.4.3" evidence="1"/>
<dbReference type="EMBL" id="CP000909">
    <property type="protein sequence ID" value="ABY35840.1"/>
    <property type="molecule type" value="Genomic_DNA"/>
</dbReference>
<dbReference type="RefSeq" id="WP_012258493.1">
    <property type="nucleotide sequence ID" value="NC_010175.1"/>
</dbReference>
<dbReference type="RefSeq" id="YP_001636229.1">
    <property type="nucleotide sequence ID" value="NC_010175.1"/>
</dbReference>
<dbReference type="SMR" id="A9WIW3"/>
<dbReference type="STRING" id="324602.Caur_2634"/>
<dbReference type="EnsemblBacteria" id="ABY35840">
    <property type="protein sequence ID" value="ABY35840"/>
    <property type="gene ID" value="Caur_2634"/>
</dbReference>
<dbReference type="KEGG" id="cau:Caur_2634"/>
<dbReference type="PATRIC" id="fig|324602.8.peg.2969"/>
<dbReference type="eggNOG" id="COG2759">
    <property type="taxonomic scope" value="Bacteria"/>
</dbReference>
<dbReference type="HOGENOM" id="CLU_003601_3_3_0"/>
<dbReference type="InParanoid" id="A9WIW3"/>
<dbReference type="UniPathway" id="UPA00193"/>
<dbReference type="Proteomes" id="UP000002008">
    <property type="component" value="Chromosome"/>
</dbReference>
<dbReference type="GO" id="GO:0005829">
    <property type="term" value="C:cytosol"/>
    <property type="evidence" value="ECO:0000318"/>
    <property type="project" value="GO_Central"/>
</dbReference>
<dbReference type="GO" id="GO:0005524">
    <property type="term" value="F:ATP binding"/>
    <property type="evidence" value="ECO:0007669"/>
    <property type="project" value="UniProtKB-UniRule"/>
</dbReference>
<dbReference type="GO" id="GO:0004329">
    <property type="term" value="F:formate-tetrahydrofolate ligase activity"/>
    <property type="evidence" value="ECO:0007669"/>
    <property type="project" value="UniProtKB-UniRule"/>
</dbReference>
<dbReference type="GO" id="GO:0004477">
    <property type="term" value="F:methenyltetrahydrofolate cyclohydrolase activity"/>
    <property type="evidence" value="ECO:0000318"/>
    <property type="project" value="GO_Central"/>
</dbReference>
<dbReference type="GO" id="GO:0004488">
    <property type="term" value="F:methylenetetrahydrofolate dehydrogenase (NADP+) activity"/>
    <property type="evidence" value="ECO:0000318"/>
    <property type="project" value="GO_Central"/>
</dbReference>
<dbReference type="GO" id="GO:0035999">
    <property type="term" value="P:tetrahydrofolate interconversion"/>
    <property type="evidence" value="ECO:0000318"/>
    <property type="project" value="GO_Central"/>
</dbReference>
<dbReference type="CDD" id="cd00477">
    <property type="entry name" value="FTHFS"/>
    <property type="match status" value="1"/>
</dbReference>
<dbReference type="FunFam" id="3.30.1510.10:FF:000009">
    <property type="entry name" value="Formate--tetrahydrofolate ligase"/>
    <property type="match status" value="1"/>
</dbReference>
<dbReference type="FunFam" id="3.10.410.10:FF:000001">
    <property type="entry name" value="Putative formate--tetrahydrofolate ligase"/>
    <property type="match status" value="1"/>
</dbReference>
<dbReference type="Gene3D" id="3.30.1510.10">
    <property type="entry name" value="Domain 2, N(10)-formyltetrahydrofolate synthetase"/>
    <property type="match status" value="1"/>
</dbReference>
<dbReference type="Gene3D" id="3.10.410.10">
    <property type="entry name" value="Formyltetrahydrofolate synthetase, domain 3"/>
    <property type="match status" value="1"/>
</dbReference>
<dbReference type="Gene3D" id="3.40.50.300">
    <property type="entry name" value="P-loop containing nucleotide triphosphate hydrolases"/>
    <property type="match status" value="1"/>
</dbReference>
<dbReference type="HAMAP" id="MF_01543">
    <property type="entry name" value="FTHFS"/>
    <property type="match status" value="1"/>
</dbReference>
<dbReference type="InterPro" id="IPR000559">
    <property type="entry name" value="Formate_THF_ligase"/>
</dbReference>
<dbReference type="InterPro" id="IPR020628">
    <property type="entry name" value="Formate_THF_ligase_CS"/>
</dbReference>
<dbReference type="InterPro" id="IPR027417">
    <property type="entry name" value="P-loop_NTPase"/>
</dbReference>
<dbReference type="NCBIfam" id="NF010030">
    <property type="entry name" value="PRK13505.1"/>
    <property type="match status" value="1"/>
</dbReference>
<dbReference type="Pfam" id="PF01268">
    <property type="entry name" value="FTHFS"/>
    <property type="match status" value="1"/>
</dbReference>
<dbReference type="SUPFAM" id="SSF52540">
    <property type="entry name" value="P-loop containing nucleoside triphosphate hydrolases"/>
    <property type="match status" value="1"/>
</dbReference>
<dbReference type="PROSITE" id="PS00721">
    <property type="entry name" value="FTHFS_1"/>
    <property type="match status" value="1"/>
</dbReference>
<dbReference type="PROSITE" id="PS00722">
    <property type="entry name" value="FTHFS_2"/>
    <property type="match status" value="1"/>
</dbReference>
<gene>
    <name evidence="1" type="primary">fhs</name>
    <name type="ordered locus">Caur_2634</name>
</gene>
<keyword id="KW-0067">ATP-binding</keyword>
<keyword id="KW-0436">Ligase</keyword>
<keyword id="KW-0547">Nucleotide-binding</keyword>
<keyword id="KW-0554">One-carbon metabolism</keyword>
<keyword id="KW-1185">Reference proteome</keyword>
<feature type="chain" id="PRO_1000087649" description="Formate--tetrahydrofolate ligase">
    <location>
        <begin position="1"/>
        <end position="572"/>
    </location>
</feature>
<feature type="binding site" evidence="1">
    <location>
        <begin position="65"/>
        <end position="72"/>
    </location>
    <ligand>
        <name>ATP</name>
        <dbReference type="ChEBI" id="CHEBI:30616"/>
    </ligand>
</feature>